<evidence type="ECO:0000255" key="1">
    <source>
        <dbReference type="HAMAP-Rule" id="MF_00274"/>
    </source>
</evidence>
<feature type="chain" id="PRO_1000114572" description="Nucleoid-associated protein ABSDF1914">
    <location>
        <begin position="1"/>
        <end position="109"/>
    </location>
</feature>
<protein>
    <recommendedName>
        <fullName evidence="1">Nucleoid-associated protein ABSDF1914</fullName>
    </recommendedName>
</protein>
<comment type="function">
    <text evidence="1">Binds to DNA and alters its conformation. May be involved in regulation of gene expression, nucleoid organization and DNA protection.</text>
</comment>
<comment type="subunit">
    <text evidence="1">Homodimer.</text>
</comment>
<comment type="subcellular location">
    <subcellularLocation>
        <location evidence="1">Cytoplasm</location>
        <location evidence="1">Nucleoid</location>
    </subcellularLocation>
</comment>
<comment type="similarity">
    <text evidence="1">Belongs to the YbaB/EbfC family.</text>
</comment>
<reference key="1">
    <citation type="journal article" date="2008" name="PLoS ONE">
        <title>Comparative analysis of Acinetobacters: three genomes for three lifestyles.</title>
        <authorList>
            <person name="Vallenet D."/>
            <person name="Nordmann P."/>
            <person name="Barbe V."/>
            <person name="Poirel L."/>
            <person name="Mangenot S."/>
            <person name="Bataille E."/>
            <person name="Dossat C."/>
            <person name="Gas S."/>
            <person name="Kreimeyer A."/>
            <person name="Lenoble P."/>
            <person name="Oztas S."/>
            <person name="Poulain J."/>
            <person name="Segurens B."/>
            <person name="Robert C."/>
            <person name="Abergel C."/>
            <person name="Claverie J.-M."/>
            <person name="Raoult D."/>
            <person name="Medigue C."/>
            <person name="Weissenbach J."/>
            <person name="Cruveiller S."/>
        </authorList>
    </citation>
    <scope>NUCLEOTIDE SEQUENCE [LARGE SCALE GENOMIC DNA]</scope>
    <source>
        <strain>SDF</strain>
    </source>
</reference>
<gene>
    <name type="ordered locus">ABSDF1914</name>
</gene>
<dbReference type="EMBL" id="CU468230">
    <property type="protein sequence ID" value="CAP01249.1"/>
    <property type="molecule type" value="Genomic_DNA"/>
</dbReference>
<dbReference type="SMR" id="B0VPL6"/>
<dbReference type="KEGG" id="abm:ABSDF1914"/>
<dbReference type="HOGENOM" id="CLU_140930_0_0_6"/>
<dbReference type="BioCyc" id="ABAU509170:GCL9-1572-MONOMER"/>
<dbReference type="Proteomes" id="UP000001741">
    <property type="component" value="Chromosome"/>
</dbReference>
<dbReference type="GO" id="GO:0043590">
    <property type="term" value="C:bacterial nucleoid"/>
    <property type="evidence" value="ECO:0007669"/>
    <property type="project" value="UniProtKB-UniRule"/>
</dbReference>
<dbReference type="GO" id="GO:0005829">
    <property type="term" value="C:cytosol"/>
    <property type="evidence" value="ECO:0007669"/>
    <property type="project" value="TreeGrafter"/>
</dbReference>
<dbReference type="GO" id="GO:0003677">
    <property type="term" value="F:DNA binding"/>
    <property type="evidence" value="ECO:0007669"/>
    <property type="project" value="UniProtKB-UniRule"/>
</dbReference>
<dbReference type="Gene3D" id="3.30.1310.10">
    <property type="entry name" value="Nucleoid-associated protein YbaB-like domain"/>
    <property type="match status" value="1"/>
</dbReference>
<dbReference type="HAMAP" id="MF_00274">
    <property type="entry name" value="DNA_YbaB_EbfC"/>
    <property type="match status" value="1"/>
</dbReference>
<dbReference type="InterPro" id="IPR036894">
    <property type="entry name" value="YbaB-like_sf"/>
</dbReference>
<dbReference type="InterPro" id="IPR004401">
    <property type="entry name" value="YbaB/EbfC"/>
</dbReference>
<dbReference type="NCBIfam" id="TIGR00103">
    <property type="entry name" value="DNA_YbaB_EbfC"/>
    <property type="match status" value="1"/>
</dbReference>
<dbReference type="PANTHER" id="PTHR33449">
    <property type="entry name" value="NUCLEOID-ASSOCIATED PROTEIN YBAB"/>
    <property type="match status" value="1"/>
</dbReference>
<dbReference type="PANTHER" id="PTHR33449:SF1">
    <property type="entry name" value="NUCLEOID-ASSOCIATED PROTEIN YBAB"/>
    <property type="match status" value="1"/>
</dbReference>
<dbReference type="Pfam" id="PF02575">
    <property type="entry name" value="YbaB_DNA_bd"/>
    <property type="match status" value="1"/>
</dbReference>
<dbReference type="PIRSF" id="PIRSF004555">
    <property type="entry name" value="UCP004555"/>
    <property type="match status" value="1"/>
</dbReference>
<dbReference type="SUPFAM" id="SSF82607">
    <property type="entry name" value="YbaB-like"/>
    <property type="match status" value="1"/>
</dbReference>
<keyword id="KW-0963">Cytoplasm</keyword>
<keyword id="KW-0238">DNA-binding</keyword>
<proteinExistence type="inferred from homology"/>
<name>Y1914_ACIBS</name>
<organism>
    <name type="scientific">Acinetobacter baumannii (strain SDF)</name>
    <dbReference type="NCBI Taxonomy" id="509170"/>
    <lineage>
        <taxon>Bacteria</taxon>
        <taxon>Pseudomonadati</taxon>
        <taxon>Pseudomonadota</taxon>
        <taxon>Gammaproteobacteria</taxon>
        <taxon>Moraxellales</taxon>
        <taxon>Moraxellaceae</taxon>
        <taxon>Acinetobacter</taxon>
        <taxon>Acinetobacter calcoaceticus/baumannii complex</taxon>
    </lineage>
</organism>
<sequence>MNINMLMQQAQRMQKDMESNIKKAKEELAQTEVHAEAGGGLVKVTMTGRYIVKRIEINPELLQDEPDMIEDLIAAAVNDAVRQAEVVSEEKMQKANSGMGLPPGLAGMF</sequence>
<accession>B0VPL6</accession>